<protein>
    <recommendedName>
        <fullName evidence="1">Alanine--tRNA ligase</fullName>
        <ecNumber evidence="1">6.1.1.7</ecNumber>
    </recommendedName>
    <alternativeName>
        <fullName evidence="1">Alanyl-tRNA synthetase</fullName>
        <shortName evidence="1">AlaRS</shortName>
    </alternativeName>
</protein>
<evidence type="ECO:0000255" key="1">
    <source>
        <dbReference type="HAMAP-Rule" id="MF_00036"/>
    </source>
</evidence>
<sequence>MLSNTLRSNFLKFYANRNHTPVASSPVFPHNDPSILFTNAGMNQFKNIFLGKEQTSYTRATTSQKCIRAGGKHNDLENVGHTSRHLTFFEMLGNFSFGDYFKQDAISFAWEVSLSVFNFDPDFIYATVHEKDDEAFALWEKYLPTDRIFRLTDKDNFWSMADTGPCGFCSELLFDRGEKFGKAASPLEDVDGERFLEYWNLVFMEFNRTSDGTLLALQKKCVDTGAGLERLVSLLAETKTVFEADVLRHLISKIENLSGTTYSPTEAKGAAFRVIADHIRSLSFAIADGLLPGNTERGYVLRKILRRAVNYGKRLGFNRPFLADVVPSLVDVMGEAYPELSASVTQIQEVLTTEEEHFFKTLQRGGNLLQQVLKSSASSAKISGEDAFKLKDTYGLPIDEIALLAKDYNYAIDMDTFEKLEVEAKERSRKNTKKTKNDSDSVFQDLDPTNTSEFIGYDTLSCDTFIEGIIKYNEIASSLEEGDEGAIILRTTPFYAEKGGQIGDSGEIFCESGTFLVSHTIAPKAGLIVHLGKLSQGSLTTTMAVTAQVNQNLRKKTANNHTGCHLLHKALEMTLGEHIRQAGSYVDSQKIRLDFTHNKALSPEDLLAIETLVNEKIRENDPVTIREVLYSDVMSSSEIKQFCGDKYGDIVRVVLAGFSHELCGGTHAQATGDIGYFRITKEHAVATGIRRIEATTGEDAENIARGQDVDLNEIATVIQSPKDQILVKIRSVMEEKKDLAKQVADLENQLVQQQVKTLLTSCEKICDTSYLVYYLTEEEGQRIQHYANAIHKEIPTNFISLWITEKNGRYIVLSRVSDDLTKRGVQAHTLLAELLAPYGGRCGGKAISAQGSSAELPQIEFLNKTLRQWISTQLA</sequence>
<name>SYA_CHLT2</name>
<proteinExistence type="inferred from homology"/>
<feature type="chain" id="PRO_0000347548" description="Alanine--tRNA ligase">
    <location>
        <begin position="1"/>
        <end position="875"/>
    </location>
</feature>
<feature type="binding site" evidence="1">
    <location>
        <position position="561"/>
    </location>
    <ligand>
        <name>Zn(2+)</name>
        <dbReference type="ChEBI" id="CHEBI:29105"/>
    </ligand>
</feature>
<feature type="binding site" evidence="1">
    <location>
        <position position="565"/>
    </location>
    <ligand>
        <name>Zn(2+)</name>
        <dbReference type="ChEBI" id="CHEBI:29105"/>
    </ligand>
</feature>
<feature type="binding site" evidence="1">
    <location>
        <position position="663"/>
    </location>
    <ligand>
        <name>Zn(2+)</name>
        <dbReference type="ChEBI" id="CHEBI:29105"/>
    </ligand>
</feature>
<feature type="binding site" evidence="1">
    <location>
        <position position="667"/>
    </location>
    <ligand>
        <name>Zn(2+)</name>
        <dbReference type="ChEBI" id="CHEBI:29105"/>
    </ligand>
</feature>
<comment type="function">
    <text evidence="1">Catalyzes the attachment of alanine to tRNA(Ala) in a two-step reaction: alanine is first activated by ATP to form Ala-AMP and then transferred to the acceptor end of tRNA(Ala). Also edits incorrectly charged Ser-tRNA(Ala) and Gly-tRNA(Ala) via its editing domain.</text>
</comment>
<comment type="catalytic activity">
    <reaction evidence="1">
        <text>tRNA(Ala) + L-alanine + ATP = L-alanyl-tRNA(Ala) + AMP + diphosphate</text>
        <dbReference type="Rhea" id="RHEA:12540"/>
        <dbReference type="Rhea" id="RHEA-COMP:9657"/>
        <dbReference type="Rhea" id="RHEA-COMP:9923"/>
        <dbReference type="ChEBI" id="CHEBI:30616"/>
        <dbReference type="ChEBI" id="CHEBI:33019"/>
        <dbReference type="ChEBI" id="CHEBI:57972"/>
        <dbReference type="ChEBI" id="CHEBI:78442"/>
        <dbReference type="ChEBI" id="CHEBI:78497"/>
        <dbReference type="ChEBI" id="CHEBI:456215"/>
        <dbReference type="EC" id="6.1.1.7"/>
    </reaction>
</comment>
<comment type="cofactor">
    <cofactor evidence="1">
        <name>Zn(2+)</name>
        <dbReference type="ChEBI" id="CHEBI:29105"/>
    </cofactor>
    <text evidence="1">Binds 1 zinc ion per subunit.</text>
</comment>
<comment type="subcellular location">
    <subcellularLocation>
        <location evidence="1">Cytoplasm</location>
    </subcellularLocation>
</comment>
<comment type="domain">
    <text evidence="1">Consists of three domains; the N-terminal catalytic domain, the editing domain and the C-terminal C-Ala domain. The editing domain removes incorrectly charged amino acids, while the C-Ala domain, along with tRNA(Ala), serves as a bridge to cooperatively bring together the editing and aminoacylation centers thus stimulating deacylation of misacylated tRNAs.</text>
</comment>
<comment type="similarity">
    <text evidence="1">Belongs to the class-II aminoacyl-tRNA synthetase family.</text>
</comment>
<dbReference type="EC" id="6.1.1.7" evidence="1"/>
<dbReference type="EMBL" id="AM884176">
    <property type="protein sequence ID" value="CAP03562.1"/>
    <property type="molecule type" value="Genomic_DNA"/>
</dbReference>
<dbReference type="RefSeq" id="WP_009873349.1">
    <property type="nucleotide sequence ID" value="NC_010287.1"/>
</dbReference>
<dbReference type="RefSeq" id="YP_001654209.1">
    <property type="nucleotide sequence ID" value="NC_010287.1"/>
</dbReference>
<dbReference type="SMR" id="B0B8X5"/>
<dbReference type="KEGG" id="ctb:CTL0118"/>
<dbReference type="PATRIC" id="fig|471472.4.peg.128"/>
<dbReference type="HOGENOM" id="CLU_004485_1_1_0"/>
<dbReference type="Proteomes" id="UP001154402">
    <property type="component" value="Chromosome"/>
</dbReference>
<dbReference type="GO" id="GO:0005829">
    <property type="term" value="C:cytosol"/>
    <property type="evidence" value="ECO:0007669"/>
    <property type="project" value="TreeGrafter"/>
</dbReference>
<dbReference type="GO" id="GO:0004813">
    <property type="term" value="F:alanine-tRNA ligase activity"/>
    <property type="evidence" value="ECO:0007669"/>
    <property type="project" value="UniProtKB-UniRule"/>
</dbReference>
<dbReference type="GO" id="GO:0002161">
    <property type="term" value="F:aminoacyl-tRNA deacylase activity"/>
    <property type="evidence" value="ECO:0007669"/>
    <property type="project" value="TreeGrafter"/>
</dbReference>
<dbReference type="GO" id="GO:0005524">
    <property type="term" value="F:ATP binding"/>
    <property type="evidence" value="ECO:0007669"/>
    <property type="project" value="UniProtKB-UniRule"/>
</dbReference>
<dbReference type="GO" id="GO:0000049">
    <property type="term" value="F:tRNA binding"/>
    <property type="evidence" value="ECO:0007669"/>
    <property type="project" value="UniProtKB-KW"/>
</dbReference>
<dbReference type="GO" id="GO:0008270">
    <property type="term" value="F:zinc ion binding"/>
    <property type="evidence" value="ECO:0007669"/>
    <property type="project" value="UniProtKB-UniRule"/>
</dbReference>
<dbReference type="GO" id="GO:0006419">
    <property type="term" value="P:alanyl-tRNA aminoacylation"/>
    <property type="evidence" value="ECO:0007669"/>
    <property type="project" value="UniProtKB-UniRule"/>
</dbReference>
<dbReference type="CDD" id="cd00673">
    <property type="entry name" value="AlaRS_core"/>
    <property type="match status" value="1"/>
</dbReference>
<dbReference type="FunFam" id="2.40.30.130:FF:000001">
    <property type="entry name" value="Alanine--tRNA ligase"/>
    <property type="match status" value="1"/>
</dbReference>
<dbReference type="FunFam" id="3.30.930.10:FF:000004">
    <property type="entry name" value="Alanine--tRNA ligase"/>
    <property type="match status" value="1"/>
</dbReference>
<dbReference type="FunFam" id="3.30.980.10:FF:000004">
    <property type="entry name" value="Alanine--tRNA ligase, cytoplasmic"/>
    <property type="match status" value="1"/>
</dbReference>
<dbReference type="Gene3D" id="2.40.30.130">
    <property type="match status" value="1"/>
</dbReference>
<dbReference type="Gene3D" id="3.10.310.40">
    <property type="match status" value="1"/>
</dbReference>
<dbReference type="Gene3D" id="3.30.54.20">
    <property type="match status" value="1"/>
</dbReference>
<dbReference type="Gene3D" id="3.30.930.10">
    <property type="entry name" value="Bira Bifunctional Protein, Domain 2"/>
    <property type="match status" value="1"/>
</dbReference>
<dbReference type="Gene3D" id="3.30.980.10">
    <property type="entry name" value="Threonyl-trna Synthetase, Chain A, domain 2"/>
    <property type="match status" value="1"/>
</dbReference>
<dbReference type="HAMAP" id="MF_00036_B">
    <property type="entry name" value="Ala_tRNA_synth_B"/>
    <property type="match status" value="1"/>
</dbReference>
<dbReference type="InterPro" id="IPR045864">
    <property type="entry name" value="aa-tRNA-synth_II/BPL/LPL"/>
</dbReference>
<dbReference type="InterPro" id="IPR002318">
    <property type="entry name" value="Ala-tRNA-lgiase_IIc"/>
</dbReference>
<dbReference type="InterPro" id="IPR018162">
    <property type="entry name" value="Ala-tRNA-ligase_IIc_anticod-bd"/>
</dbReference>
<dbReference type="InterPro" id="IPR018165">
    <property type="entry name" value="Ala-tRNA-synth_IIc_core"/>
</dbReference>
<dbReference type="InterPro" id="IPR018164">
    <property type="entry name" value="Ala-tRNA-synth_IIc_N"/>
</dbReference>
<dbReference type="InterPro" id="IPR050058">
    <property type="entry name" value="Ala-tRNA_ligase"/>
</dbReference>
<dbReference type="InterPro" id="IPR023033">
    <property type="entry name" value="Ala_tRNA_ligase_euk/bac"/>
</dbReference>
<dbReference type="InterPro" id="IPR003156">
    <property type="entry name" value="DHHA1_dom"/>
</dbReference>
<dbReference type="InterPro" id="IPR018163">
    <property type="entry name" value="Thr/Ala-tRNA-synth_IIc_edit"/>
</dbReference>
<dbReference type="InterPro" id="IPR009000">
    <property type="entry name" value="Transl_B-barrel_sf"/>
</dbReference>
<dbReference type="InterPro" id="IPR012947">
    <property type="entry name" value="tRNA_SAD"/>
</dbReference>
<dbReference type="NCBIfam" id="TIGR00344">
    <property type="entry name" value="alaS"/>
    <property type="match status" value="1"/>
</dbReference>
<dbReference type="PANTHER" id="PTHR11777:SF9">
    <property type="entry name" value="ALANINE--TRNA LIGASE, CYTOPLASMIC"/>
    <property type="match status" value="1"/>
</dbReference>
<dbReference type="PANTHER" id="PTHR11777">
    <property type="entry name" value="ALANYL-TRNA SYNTHETASE"/>
    <property type="match status" value="1"/>
</dbReference>
<dbReference type="Pfam" id="PF02272">
    <property type="entry name" value="DHHA1"/>
    <property type="match status" value="1"/>
</dbReference>
<dbReference type="Pfam" id="PF01411">
    <property type="entry name" value="tRNA-synt_2c"/>
    <property type="match status" value="1"/>
</dbReference>
<dbReference type="Pfam" id="PF07973">
    <property type="entry name" value="tRNA_SAD"/>
    <property type="match status" value="1"/>
</dbReference>
<dbReference type="PRINTS" id="PR00980">
    <property type="entry name" value="TRNASYNTHALA"/>
</dbReference>
<dbReference type="SMART" id="SM00863">
    <property type="entry name" value="tRNA_SAD"/>
    <property type="match status" value="1"/>
</dbReference>
<dbReference type="SUPFAM" id="SSF55681">
    <property type="entry name" value="Class II aaRS and biotin synthetases"/>
    <property type="match status" value="1"/>
</dbReference>
<dbReference type="SUPFAM" id="SSF101353">
    <property type="entry name" value="Putative anticodon-binding domain of alanyl-tRNA synthetase (AlaRS)"/>
    <property type="match status" value="1"/>
</dbReference>
<dbReference type="SUPFAM" id="SSF55186">
    <property type="entry name" value="ThrRS/AlaRS common domain"/>
    <property type="match status" value="1"/>
</dbReference>
<dbReference type="SUPFAM" id="SSF50447">
    <property type="entry name" value="Translation proteins"/>
    <property type="match status" value="1"/>
</dbReference>
<dbReference type="PROSITE" id="PS50860">
    <property type="entry name" value="AA_TRNA_LIGASE_II_ALA"/>
    <property type="match status" value="1"/>
</dbReference>
<organism>
    <name type="scientific">Chlamydia trachomatis serovar L2 (strain ATCC VR-902B / DSM 19102 / 434/Bu)</name>
    <dbReference type="NCBI Taxonomy" id="471472"/>
    <lineage>
        <taxon>Bacteria</taxon>
        <taxon>Pseudomonadati</taxon>
        <taxon>Chlamydiota</taxon>
        <taxon>Chlamydiia</taxon>
        <taxon>Chlamydiales</taxon>
        <taxon>Chlamydiaceae</taxon>
        <taxon>Chlamydia/Chlamydophila group</taxon>
        <taxon>Chlamydia</taxon>
    </lineage>
</organism>
<accession>B0B8X5</accession>
<keyword id="KW-0030">Aminoacyl-tRNA synthetase</keyword>
<keyword id="KW-0067">ATP-binding</keyword>
<keyword id="KW-0963">Cytoplasm</keyword>
<keyword id="KW-0436">Ligase</keyword>
<keyword id="KW-0479">Metal-binding</keyword>
<keyword id="KW-0547">Nucleotide-binding</keyword>
<keyword id="KW-0648">Protein biosynthesis</keyword>
<keyword id="KW-0694">RNA-binding</keyword>
<keyword id="KW-0820">tRNA-binding</keyword>
<keyword id="KW-0862">Zinc</keyword>
<reference key="1">
    <citation type="journal article" date="2008" name="Genome Res.">
        <title>Chlamydia trachomatis: genome sequence analysis of lymphogranuloma venereum isolates.</title>
        <authorList>
            <person name="Thomson N.R."/>
            <person name="Holden M.T.G."/>
            <person name="Carder C."/>
            <person name="Lennard N."/>
            <person name="Lockey S.J."/>
            <person name="Marsh P."/>
            <person name="Skipp P."/>
            <person name="O'Connor C.D."/>
            <person name="Goodhead I."/>
            <person name="Norbertzcak H."/>
            <person name="Harris B."/>
            <person name="Ormond D."/>
            <person name="Rance R."/>
            <person name="Quail M.A."/>
            <person name="Parkhill J."/>
            <person name="Stephens R.S."/>
            <person name="Clarke I.N."/>
        </authorList>
    </citation>
    <scope>NUCLEOTIDE SEQUENCE [LARGE SCALE GENOMIC DNA]</scope>
    <source>
        <strain>ATCC VR-902B / DSM 19102 / 434/Bu</strain>
    </source>
</reference>
<gene>
    <name evidence="1" type="primary">alaS</name>
    <name type="ordered locus">CTL0118</name>
</gene>